<protein>
    <recommendedName>
        <fullName evidence="1">Iron-sulfur cluster carrier protein</fullName>
    </recommendedName>
</protein>
<feature type="chain" id="PRO_0000184932" description="Iron-sulfur cluster carrier protein">
    <location>
        <begin position="1"/>
        <end position="369"/>
    </location>
</feature>
<feature type="binding site" evidence="1">
    <location>
        <begin position="115"/>
        <end position="122"/>
    </location>
    <ligand>
        <name>ATP</name>
        <dbReference type="ChEBI" id="CHEBI:30616"/>
    </ligand>
</feature>
<dbReference type="EMBL" id="U00007">
    <property type="protein sequence ID" value="AAA60527.1"/>
    <property type="status" value="ALT_INIT"/>
    <property type="molecule type" value="Genomic_DNA"/>
</dbReference>
<dbReference type="EMBL" id="X55791">
    <property type="protein sequence ID" value="CAA39316.1"/>
    <property type="molecule type" value="Genomic_DNA"/>
</dbReference>
<dbReference type="EMBL" id="U00096">
    <property type="protein sequence ID" value="AAC75174.2"/>
    <property type="molecule type" value="Genomic_DNA"/>
</dbReference>
<dbReference type="EMBL" id="AP009048">
    <property type="protein sequence ID" value="BAE76591.1"/>
    <property type="molecule type" value="Genomic_DNA"/>
</dbReference>
<dbReference type="RefSeq" id="NP_416616.4">
    <property type="nucleotide sequence ID" value="NC_000913.3"/>
</dbReference>
<dbReference type="PDB" id="8ZKC">
    <property type="method" value="X-ray"/>
    <property type="resolution" value="2.85 A"/>
    <property type="chains" value="A=1-369"/>
</dbReference>
<dbReference type="PDBsum" id="8ZKC"/>
<dbReference type="SMR" id="P0AF08"/>
<dbReference type="BioGRID" id="4259514">
    <property type="interactions" value="68"/>
</dbReference>
<dbReference type="FunCoup" id="P0AF08">
    <property type="interactions" value="736"/>
</dbReference>
<dbReference type="IntAct" id="P0AF08">
    <property type="interactions" value="6"/>
</dbReference>
<dbReference type="STRING" id="511145.b2113"/>
<dbReference type="jPOST" id="P0AF08"/>
<dbReference type="PaxDb" id="511145-b2113"/>
<dbReference type="EnsemblBacteria" id="AAC75174">
    <property type="protein sequence ID" value="AAC75174"/>
    <property type="gene ID" value="b2113"/>
</dbReference>
<dbReference type="GeneID" id="946627"/>
<dbReference type="KEGG" id="ecj:JW2100"/>
<dbReference type="KEGG" id="eco:b2113"/>
<dbReference type="KEGG" id="ecoc:C3026_11855"/>
<dbReference type="PATRIC" id="fig|1411691.4.peg.134"/>
<dbReference type="EchoBASE" id="EB0606"/>
<dbReference type="eggNOG" id="COG0489">
    <property type="taxonomic scope" value="Bacteria"/>
</dbReference>
<dbReference type="HOGENOM" id="CLU_024839_0_0_6"/>
<dbReference type="InParanoid" id="P0AF08"/>
<dbReference type="OMA" id="VSGCPMR"/>
<dbReference type="OrthoDB" id="9809679at2"/>
<dbReference type="PhylomeDB" id="P0AF08"/>
<dbReference type="BioCyc" id="EcoCyc:EG10611-MONOMER"/>
<dbReference type="PRO" id="PR:P0AF08"/>
<dbReference type="Proteomes" id="UP000000625">
    <property type="component" value="Chromosome"/>
</dbReference>
<dbReference type="GO" id="GO:0005829">
    <property type="term" value="C:cytosol"/>
    <property type="evidence" value="ECO:0000314"/>
    <property type="project" value="EcoCyc"/>
</dbReference>
<dbReference type="GO" id="GO:0051539">
    <property type="term" value="F:4 iron, 4 sulfur cluster binding"/>
    <property type="evidence" value="ECO:0000318"/>
    <property type="project" value="GO_Central"/>
</dbReference>
<dbReference type="GO" id="GO:0005524">
    <property type="term" value="F:ATP binding"/>
    <property type="evidence" value="ECO:0007669"/>
    <property type="project" value="UniProtKB-UniRule"/>
</dbReference>
<dbReference type="GO" id="GO:0016887">
    <property type="term" value="F:ATP hydrolysis activity"/>
    <property type="evidence" value="ECO:0007669"/>
    <property type="project" value="UniProtKB-UniRule"/>
</dbReference>
<dbReference type="GO" id="GO:0140663">
    <property type="term" value="F:ATP-dependent FeS chaperone activity"/>
    <property type="evidence" value="ECO:0007669"/>
    <property type="project" value="InterPro"/>
</dbReference>
<dbReference type="GO" id="GO:0046872">
    <property type="term" value="F:metal ion binding"/>
    <property type="evidence" value="ECO:0007669"/>
    <property type="project" value="UniProtKB-KW"/>
</dbReference>
<dbReference type="GO" id="GO:0016226">
    <property type="term" value="P:iron-sulfur cluster assembly"/>
    <property type="evidence" value="ECO:0000318"/>
    <property type="project" value="GO_Central"/>
</dbReference>
<dbReference type="CDD" id="cd02037">
    <property type="entry name" value="Mrp_NBP35"/>
    <property type="match status" value="1"/>
</dbReference>
<dbReference type="FunFam" id="3.40.50.300:FF:000418">
    <property type="entry name" value="Iron-sulfur cluster carrier protein"/>
    <property type="match status" value="1"/>
</dbReference>
<dbReference type="Gene3D" id="3.40.50.300">
    <property type="entry name" value="P-loop containing nucleotide triphosphate hydrolases"/>
    <property type="match status" value="1"/>
</dbReference>
<dbReference type="HAMAP" id="MF_02040">
    <property type="entry name" value="Mrp_NBP35"/>
    <property type="match status" value="1"/>
</dbReference>
<dbReference type="InterPro" id="IPR034904">
    <property type="entry name" value="FSCA_dom_sf"/>
</dbReference>
<dbReference type="InterPro" id="IPR000808">
    <property type="entry name" value="Mrp-like_CS"/>
</dbReference>
<dbReference type="InterPro" id="IPR019591">
    <property type="entry name" value="Mrp/NBP35_ATP-bd"/>
</dbReference>
<dbReference type="InterPro" id="IPR044304">
    <property type="entry name" value="NUBPL-like"/>
</dbReference>
<dbReference type="InterPro" id="IPR027417">
    <property type="entry name" value="P-loop_NTPase"/>
</dbReference>
<dbReference type="InterPro" id="IPR033756">
    <property type="entry name" value="YlxH/NBP35"/>
</dbReference>
<dbReference type="NCBIfam" id="NF008669">
    <property type="entry name" value="PRK11670.1"/>
    <property type="match status" value="1"/>
</dbReference>
<dbReference type="PANTHER" id="PTHR42961">
    <property type="entry name" value="IRON-SULFUR PROTEIN NUBPL"/>
    <property type="match status" value="1"/>
</dbReference>
<dbReference type="PANTHER" id="PTHR42961:SF2">
    <property type="entry name" value="IRON-SULFUR PROTEIN NUBPL"/>
    <property type="match status" value="1"/>
</dbReference>
<dbReference type="Pfam" id="PF10609">
    <property type="entry name" value="ParA"/>
    <property type="match status" value="1"/>
</dbReference>
<dbReference type="SUPFAM" id="SSF117916">
    <property type="entry name" value="Fe-S cluster assembly (FSCA) domain-like"/>
    <property type="match status" value="1"/>
</dbReference>
<dbReference type="SUPFAM" id="SSF52540">
    <property type="entry name" value="P-loop containing nucleoside triphosphate hydrolases"/>
    <property type="match status" value="1"/>
</dbReference>
<dbReference type="PROSITE" id="PS01215">
    <property type="entry name" value="MRP"/>
    <property type="match status" value="1"/>
</dbReference>
<organism>
    <name type="scientific">Escherichia coli (strain K12)</name>
    <dbReference type="NCBI Taxonomy" id="83333"/>
    <lineage>
        <taxon>Bacteria</taxon>
        <taxon>Pseudomonadati</taxon>
        <taxon>Pseudomonadota</taxon>
        <taxon>Gammaproteobacteria</taxon>
        <taxon>Enterobacterales</taxon>
        <taxon>Enterobacteriaceae</taxon>
        <taxon>Escherichia</taxon>
    </lineage>
</organism>
<sequence>MNEQSQAKSPEALRAMVAGTLANFQHPTLKHNLTTLKALHHVAWMDDTLHVELVMPFVWHSAFEELKEQCSAELLRITGAKAIDWKLSHNIATLKRVKNQPGINGVKNIIAVSSGKGGVGKSSTAVNLALALAAEGAKVGILDADIYGPSIPTMLGAENQRPTSPDGTHMAPIMSHGLATNSIGYLVTDDNAMVWRGPMASKALMQMLQETLWPDLDYLVLDMPPGTGDIQLTLAQNIPVTGAVVVTTPQDIALIDAKKGIVMFEKVEVPVLGIVENMSVHICSNCGHHEPIFGTGGAEKLAEKYHTQLLGQMPLHISLREDLDKGTPTVISRPESEFTAIYRQLADRVAAQLYWQGEVIPGEISFRAV</sequence>
<proteinExistence type="evidence at protein level"/>
<evidence type="ECO:0000255" key="1">
    <source>
        <dbReference type="HAMAP-Rule" id="MF_02040"/>
    </source>
</evidence>
<evidence type="ECO:0000305" key="2"/>
<accession>P0AF08</accession>
<accession>P21590</accession>
<accession>Q2MAW5</accession>
<gene>
    <name type="primary">mrp</name>
    <name type="ordered locus">b2113</name>
    <name type="ordered locus">JW2100</name>
</gene>
<comment type="function">
    <text evidence="1">Binds and transfers iron-sulfur (Fe-S) clusters to target apoproteins. Can hydrolyze ATP.</text>
</comment>
<comment type="subunit">
    <text evidence="1">Homodimer.</text>
</comment>
<comment type="similarity">
    <text evidence="1">Belongs to the Mrp/NBP35 ATP-binding proteins family.</text>
</comment>
<comment type="sequence caution" evidence="2">
    <conflict type="erroneous initiation">
        <sequence resource="EMBL-CDS" id="AAA60527"/>
    </conflict>
    <text>Extended N-terminus.</text>
</comment>
<name>APBC_ECOLI</name>
<keyword id="KW-0002">3D-structure</keyword>
<keyword id="KW-0067">ATP-binding</keyword>
<keyword id="KW-0378">Hydrolase</keyword>
<keyword id="KW-0408">Iron</keyword>
<keyword id="KW-0411">Iron-sulfur</keyword>
<keyword id="KW-0479">Metal-binding</keyword>
<keyword id="KW-0547">Nucleotide-binding</keyword>
<keyword id="KW-1185">Reference proteome</keyword>
<reference key="1">
    <citation type="journal article" date="1990" name="Mol. Gen. Genet.">
        <title>Transcription and regulation of expression of the Escherichia coli methionyl-tRNA synthetase gene.</title>
        <authorList>
            <person name="Dardel F."/>
            <person name="Panvert M."/>
            <person name="Fayat G."/>
        </authorList>
    </citation>
    <scope>NUCLEOTIDE SEQUENCE [GENOMIC DNA]</scope>
    <source>
        <strain>K12</strain>
    </source>
</reference>
<reference key="2">
    <citation type="submission" date="1993-10" db="EMBL/GenBank/DDBJ databases">
        <title>Automated multiplex sequencing of the E.coli genome.</title>
        <authorList>
            <person name="Richterich P."/>
            <person name="Lakey N."/>
            <person name="Gryan G."/>
            <person name="Jaehn L."/>
            <person name="Mintz L."/>
            <person name="Robison K."/>
            <person name="Church G.M."/>
        </authorList>
    </citation>
    <scope>NUCLEOTIDE SEQUENCE [LARGE SCALE GENOMIC DNA]</scope>
    <source>
        <strain>K12 / BHB2600</strain>
    </source>
</reference>
<reference key="3">
    <citation type="journal article" date="1997" name="Science">
        <title>The complete genome sequence of Escherichia coli K-12.</title>
        <authorList>
            <person name="Blattner F.R."/>
            <person name="Plunkett G. III"/>
            <person name="Bloch C.A."/>
            <person name="Perna N.T."/>
            <person name="Burland V."/>
            <person name="Riley M."/>
            <person name="Collado-Vides J."/>
            <person name="Glasner J.D."/>
            <person name="Rode C.K."/>
            <person name="Mayhew G.F."/>
            <person name="Gregor J."/>
            <person name="Davis N.W."/>
            <person name="Kirkpatrick H.A."/>
            <person name="Goeden M.A."/>
            <person name="Rose D.J."/>
            <person name="Mau B."/>
            <person name="Shao Y."/>
        </authorList>
    </citation>
    <scope>NUCLEOTIDE SEQUENCE [LARGE SCALE GENOMIC DNA]</scope>
    <source>
        <strain>K12 / MG1655 / ATCC 47076</strain>
    </source>
</reference>
<reference key="4">
    <citation type="journal article" date="2006" name="Mol. Syst. Biol.">
        <title>Highly accurate genome sequences of Escherichia coli K-12 strains MG1655 and W3110.</title>
        <authorList>
            <person name="Hayashi K."/>
            <person name="Morooka N."/>
            <person name="Yamamoto Y."/>
            <person name="Fujita K."/>
            <person name="Isono K."/>
            <person name="Choi S."/>
            <person name="Ohtsubo E."/>
            <person name="Baba T."/>
            <person name="Wanner B.L."/>
            <person name="Mori H."/>
            <person name="Horiuchi T."/>
        </authorList>
    </citation>
    <scope>NUCLEOTIDE SEQUENCE [LARGE SCALE GENOMIC DNA]</scope>
    <source>
        <strain>K12 / W3110 / ATCC 27325 / DSM 5911</strain>
    </source>
</reference>